<keyword id="KW-0687">Ribonucleoprotein</keyword>
<keyword id="KW-0689">Ribosomal protein</keyword>
<proteinExistence type="inferred from homology"/>
<accession>B3DVY9</accession>
<protein>
    <recommendedName>
        <fullName evidence="1">Large ribosomal subunit protein bL17</fullName>
    </recommendedName>
    <alternativeName>
        <fullName evidence="2">50S ribosomal protein L17</fullName>
    </alternativeName>
</protein>
<sequence length="131" mass="15007">MRHQKRTHKLGRDTQHRSALIANLAKELIEHKRIKTTLIKAKALRPFAEKLITLAKKGTLHARRLVVRKIHSKKAARLLFKEIAPQMQGRIGGYVRIYKMGNRLSDGAKMALIEWTEGQVPVENQKAQKAE</sequence>
<dbReference type="EMBL" id="CP000975">
    <property type="protein sequence ID" value="ACD83492.1"/>
    <property type="molecule type" value="Genomic_DNA"/>
</dbReference>
<dbReference type="RefSeq" id="WP_012463774.1">
    <property type="nucleotide sequence ID" value="NC_010794.1"/>
</dbReference>
<dbReference type="SMR" id="B3DVY9"/>
<dbReference type="STRING" id="481448.Minf_1438"/>
<dbReference type="KEGG" id="min:Minf_1438"/>
<dbReference type="eggNOG" id="COG0203">
    <property type="taxonomic scope" value="Bacteria"/>
</dbReference>
<dbReference type="HOGENOM" id="CLU_074407_2_2_0"/>
<dbReference type="OrthoDB" id="9809073at2"/>
<dbReference type="Proteomes" id="UP000009149">
    <property type="component" value="Chromosome"/>
</dbReference>
<dbReference type="GO" id="GO:0022625">
    <property type="term" value="C:cytosolic large ribosomal subunit"/>
    <property type="evidence" value="ECO:0007669"/>
    <property type="project" value="TreeGrafter"/>
</dbReference>
<dbReference type="GO" id="GO:0003735">
    <property type="term" value="F:structural constituent of ribosome"/>
    <property type="evidence" value="ECO:0007669"/>
    <property type="project" value="InterPro"/>
</dbReference>
<dbReference type="GO" id="GO:0006412">
    <property type="term" value="P:translation"/>
    <property type="evidence" value="ECO:0007669"/>
    <property type="project" value="UniProtKB-UniRule"/>
</dbReference>
<dbReference type="Gene3D" id="3.90.1030.10">
    <property type="entry name" value="Ribosomal protein L17"/>
    <property type="match status" value="1"/>
</dbReference>
<dbReference type="HAMAP" id="MF_01368">
    <property type="entry name" value="Ribosomal_bL17"/>
    <property type="match status" value="1"/>
</dbReference>
<dbReference type="InterPro" id="IPR000456">
    <property type="entry name" value="Ribosomal_bL17"/>
</dbReference>
<dbReference type="InterPro" id="IPR047859">
    <property type="entry name" value="Ribosomal_bL17_CS"/>
</dbReference>
<dbReference type="InterPro" id="IPR036373">
    <property type="entry name" value="Ribosomal_bL17_sf"/>
</dbReference>
<dbReference type="NCBIfam" id="TIGR00059">
    <property type="entry name" value="L17"/>
    <property type="match status" value="1"/>
</dbReference>
<dbReference type="PANTHER" id="PTHR14413:SF16">
    <property type="entry name" value="LARGE RIBOSOMAL SUBUNIT PROTEIN BL17M"/>
    <property type="match status" value="1"/>
</dbReference>
<dbReference type="PANTHER" id="PTHR14413">
    <property type="entry name" value="RIBOSOMAL PROTEIN L17"/>
    <property type="match status" value="1"/>
</dbReference>
<dbReference type="Pfam" id="PF01196">
    <property type="entry name" value="Ribosomal_L17"/>
    <property type="match status" value="1"/>
</dbReference>
<dbReference type="SUPFAM" id="SSF64263">
    <property type="entry name" value="Prokaryotic ribosomal protein L17"/>
    <property type="match status" value="1"/>
</dbReference>
<dbReference type="PROSITE" id="PS01167">
    <property type="entry name" value="RIBOSOMAL_L17"/>
    <property type="match status" value="1"/>
</dbReference>
<evidence type="ECO:0000255" key="1">
    <source>
        <dbReference type="HAMAP-Rule" id="MF_01368"/>
    </source>
</evidence>
<evidence type="ECO:0000305" key="2"/>
<organism>
    <name type="scientific">Methylacidiphilum infernorum (isolate V4)</name>
    <name type="common">Methylokorus infernorum (strain V4)</name>
    <dbReference type="NCBI Taxonomy" id="481448"/>
    <lineage>
        <taxon>Bacteria</taxon>
        <taxon>Pseudomonadati</taxon>
        <taxon>Verrucomicrobiota</taxon>
        <taxon>Methylacidiphilae</taxon>
        <taxon>Methylacidiphilales</taxon>
        <taxon>Methylacidiphilaceae</taxon>
        <taxon>Methylacidiphilum (ex Ratnadevi et al. 2023)</taxon>
    </lineage>
</organism>
<gene>
    <name evidence="1" type="primary">rplQ</name>
    <name type="ordered locus">Minf_1438</name>
</gene>
<feature type="chain" id="PRO_1000144447" description="Large ribosomal subunit protein bL17">
    <location>
        <begin position="1"/>
        <end position="131"/>
    </location>
</feature>
<reference key="1">
    <citation type="journal article" date="2008" name="Biol. Direct">
        <title>Complete genome sequence of the extremely acidophilic methanotroph isolate V4, Methylacidiphilum infernorum, a representative of the bacterial phylum Verrucomicrobia.</title>
        <authorList>
            <person name="Hou S."/>
            <person name="Makarova K.S."/>
            <person name="Saw J.H."/>
            <person name="Senin P."/>
            <person name="Ly B.V."/>
            <person name="Zhou Z."/>
            <person name="Ren Y."/>
            <person name="Wang J."/>
            <person name="Galperin M.Y."/>
            <person name="Omelchenko M.V."/>
            <person name="Wolf Y.I."/>
            <person name="Yutin N."/>
            <person name="Koonin E.V."/>
            <person name="Stott M.B."/>
            <person name="Mountain B.W."/>
            <person name="Crowe M.A."/>
            <person name="Smirnova A.V."/>
            <person name="Dunfield P.F."/>
            <person name="Feng L."/>
            <person name="Wang L."/>
            <person name="Alam M."/>
        </authorList>
    </citation>
    <scope>NUCLEOTIDE SEQUENCE [LARGE SCALE GENOMIC DNA]</scope>
    <source>
        <strain>Isolate V4</strain>
    </source>
</reference>
<name>RL17_METI4</name>
<comment type="subunit">
    <text evidence="1">Part of the 50S ribosomal subunit. Contacts protein L32.</text>
</comment>
<comment type="similarity">
    <text evidence="1">Belongs to the bacterial ribosomal protein bL17 family.</text>
</comment>